<organism>
    <name type="scientific">Escherichia coli (strain K12)</name>
    <dbReference type="NCBI Taxonomy" id="83333"/>
    <lineage>
        <taxon>Bacteria</taxon>
        <taxon>Pseudomonadati</taxon>
        <taxon>Pseudomonadota</taxon>
        <taxon>Gammaproteobacteria</taxon>
        <taxon>Enterobacterales</taxon>
        <taxon>Enterobacteriaceae</taxon>
        <taxon>Escherichia</taxon>
    </lineage>
</organism>
<proteinExistence type="evidence at protein level"/>
<protein>
    <recommendedName>
        <fullName evidence="1 13">HTH-type transcriptional regulator ArgP</fullName>
    </recommendedName>
    <alternativeName>
        <fullName evidence="12">Inhibitor of chromosome initiation</fullName>
    </alternativeName>
    <alternativeName>
        <fullName>OriC replication inhibitor</fullName>
    </alternativeName>
</protein>
<name>ARGP_ECOLI</name>
<gene>
    <name evidence="1 11" type="primary">argP</name>
    <name evidence="12" type="synonym">iciA</name>
    <name type="ordered locus">b2916</name>
    <name type="ordered locus">JW2883</name>
</gene>
<reference key="1">
    <citation type="journal article" date="1991" name="Proc. Natl. Acad. Sci. U.S.A.">
        <title>iciA, an Escherichia coli gene encoding a specific inhibitor of chromosomal initiation of replication in vitro.</title>
        <authorList>
            <person name="Thoeny B."/>
            <person name="Hwang D.S."/>
            <person name="Fradkin L."/>
            <person name="Kornberg A."/>
        </authorList>
    </citation>
    <scope>NUCLEOTIDE SEQUENCE [GENOMIC DNA]</scope>
    <scope>PROTEIN SEQUENCE OF 1-41</scope>
    <source>
        <strain>K12 / W3110 / ATCC 27325 / DSM 5911</strain>
    </source>
</reference>
<reference key="2">
    <citation type="submission" date="1992-06" db="EMBL/GenBank/DDBJ databases">
        <authorList>
            <person name="Roy I."/>
            <person name="Leadlay P.F."/>
        </authorList>
    </citation>
    <scope>NUCLEOTIDE SEQUENCE [GENOMIC DNA]</scope>
    <source>
        <strain>K12</strain>
    </source>
</reference>
<reference key="3">
    <citation type="journal article" date="1997" name="Science">
        <title>The complete genome sequence of Escherichia coli K-12.</title>
        <authorList>
            <person name="Blattner F.R."/>
            <person name="Plunkett G. III"/>
            <person name="Bloch C.A."/>
            <person name="Perna N.T."/>
            <person name="Burland V."/>
            <person name="Riley M."/>
            <person name="Collado-Vides J."/>
            <person name="Glasner J.D."/>
            <person name="Rode C.K."/>
            <person name="Mayhew G.F."/>
            <person name="Gregor J."/>
            <person name="Davis N.W."/>
            <person name="Kirkpatrick H.A."/>
            <person name="Goeden M.A."/>
            <person name="Rose D.J."/>
            <person name="Mau B."/>
            <person name="Shao Y."/>
        </authorList>
    </citation>
    <scope>NUCLEOTIDE SEQUENCE [LARGE SCALE GENOMIC DNA]</scope>
    <source>
        <strain>K12 / MG1655 / ATCC 47076</strain>
    </source>
</reference>
<reference key="4">
    <citation type="journal article" date="2006" name="Mol. Syst. Biol.">
        <title>Highly accurate genome sequences of Escherichia coli K-12 strains MG1655 and W3110.</title>
        <authorList>
            <person name="Hayashi K."/>
            <person name="Morooka N."/>
            <person name="Yamamoto Y."/>
            <person name="Fujita K."/>
            <person name="Isono K."/>
            <person name="Choi S."/>
            <person name="Ohtsubo E."/>
            <person name="Baba T."/>
            <person name="Wanner B.L."/>
            <person name="Mori H."/>
            <person name="Horiuchi T."/>
        </authorList>
    </citation>
    <scope>NUCLEOTIDE SEQUENCE [LARGE SCALE GENOMIC DNA]</scope>
    <source>
        <strain>K12 / W3110 / ATCC 27325 / DSM 5911</strain>
    </source>
</reference>
<reference key="5">
    <citation type="journal article" date="1993" name="J. Bacteriol.">
        <title>Escherichia coli rpiA gene encoding ribose phosphate isomerase A.</title>
        <authorList>
            <person name="Hove-Jensen B."/>
            <person name="Maigaard M."/>
        </authorList>
    </citation>
    <scope>NUCLEOTIDE SEQUENCE [GENOMIC DNA] OF 1-176</scope>
    <source>
        <strain>K12</strain>
    </source>
</reference>
<reference key="6">
    <citation type="journal article" date="1992" name="J. Biol. Chem.">
        <title>IciA protein, a specific inhibitor of initiation of Escherichia coli chromosomal replication.</title>
        <authorList>
            <person name="Hwang D.S."/>
            <person name="Thoeny B."/>
            <person name="Kornberg A."/>
        </authorList>
    </citation>
    <scope>BINDING TO ORIC</scope>
    <scope>SUBUNIT</scope>
    <scope>DEVELOPMENTAL STAGE</scope>
</reference>
<reference key="7">
    <citation type="journal article" date="1993" name="FEBS Lett.">
        <title>Hydrolysis of the IciA protein, an inhibitor of DNA replication initiation, by protease Do in Escherichia coli.</title>
        <authorList>
            <person name="Yoo S.J."/>
            <person name="Seol J.H."/>
            <person name="Woo S.K."/>
            <person name="Suh S.W."/>
            <person name="Hwang D.S."/>
            <person name="Ha D.B."/>
            <person name="Chung C.H."/>
        </authorList>
    </citation>
    <scope>CLEAVAGE BY DEGP</scope>
</reference>
<reference key="8">
    <citation type="journal article" date="1997" name="Nucleic Acids Res.">
        <title>The binding of two dimers of IciA protein to the dnaA promoter 1P element enhances the binding of RNA polymerase to the dnaA promoter 1P.</title>
        <authorList>
            <person name="Lee Y."/>
            <person name="Lee H."/>
            <person name="Yim J."/>
            <person name="Hwang D."/>
        </authorList>
    </citation>
    <scope>PUTATIVE FUNCTION IN REGULATION OF DNAA EXPRESSION</scope>
    <scope>DNA-BINDING</scope>
</reference>
<reference key="9">
    <citation type="journal article" date="1998" name="Mol. Gen. Genet.">
        <title>Effect of IciA protein on the expression of the nrd gene encoding ribonucleoside diphosphate reductase in E. coli.</title>
        <authorList>
            <person name="Han J.S."/>
            <person name="Kwon H.S."/>
            <person name="Yim J.B."/>
            <person name="Hwang D.S."/>
        </authorList>
    </citation>
    <scope>PUTATIVE FUNCTION IN REGULATION OF NRD EXPRESSION</scope>
    <scope>DNA-BINDING</scope>
</reference>
<reference key="10">
    <citation type="journal article" date="1999" name="J. Biol. Chem.">
        <title>Twelve species of the nucleoid-associated protein from Escherichia coli. Sequence recognition specificity and DNA binding affinity.</title>
        <authorList>
            <person name="Azam T.A."/>
            <person name="Ishihama A."/>
        </authorList>
    </citation>
    <scope>DNA-BINDING</scope>
</reference>
<reference key="11">
    <citation type="journal article" date="1999" name="J. Mol. Biol.">
        <title>Repression and activation of arginine transport genes in Escherichia coli K 12 by the ArgP protein.</title>
        <authorList>
            <person name="Celis R.T."/>
        </authorList>
    </citation>
    <scope>FUNCTION IN REGULATION OF ARGK EXPRESSION</scope>
    <scope>DNA-BINDING</scope>
</reference>
<reference key="12">
    <citation type="journal article" date="2004" name="J. Bacteriol.">
        <title>Evidence for an arginine exporter encoded by yggA (argO) that is regulated by the LysR-type transcriptional regulator ArgP in Escherichia coli.</title>
        <authorList>
            <person name="Nandineni M.R."/>
            <person name="Gowrishankar J."/>
        </authorList>
    </citation>
    <scope>FUNCTION IN REGULATION OF ARGO EXPRESSION</scope>
    <scope>DISRUPTION PHENOTYPE</scope>
    <source>
        <strain>K12 / MC4100 / ATCC 35695 / DSM 6574</strain>
    </source>
</reference>
<reference key="13">
    <citation type="journal article" date="2007" name="Genes Dev.">
        <title>Environmental regulation operating at the promoter clearance step of bacterial transcription.</title>
        <authorList>
            <person name="Laishram R.S."/>
            <person name="Gowrishankar J."/>
        </authorList>
    </citation>
    <scope>FUNCTION IN REGULATION OF ARGO EXPRESSION</scope>
    <scope>DNA-BINDING</scope>
</reference>
<reference key="14">
    <citation type="journal article" date="2011" name="J. Bacteriol.">
        <title>Identification of ArgP and Lrp as transcriptional regulators of lysP, the gene encoding the specific lysine permease of Escherichia coli.</title>
        <authorList>
            <person name="Ruiz J."/>
            <person name="Haneburger I."/>
            <person name="Jung K."/>
        </authorList>
    </citation>
    <scope>FUNCTION IN REGULATION OF LYSP EXPRESSION</scope>
    <scope>DNA-BINDING</scope>
    <source>
        <strain>K12</strain>
    </source>
</reference>
<reference key="15">
    <citation type="journal article" date="2011" name="J. Bacteriol.">
        <title>Role of ArgP (IciA) in lysine-mediated repression in Escherichia coli.</title>
        <authorList>
            <person name="Marbaniang C.N."/>
            <person name="Gowrishankar J."/>
        </authorList>
    </citation>
    <scope>FUNCTION</scope>
    <scope>DNA-BINDING</scope>
    <source>
        <strain>K12 / MC4100 / ATCC 35695 / DSM 6574</strain>
    </source>
</reference>
<keyword id="KW-0010">Activator</keyword>
<keyword id="KW-0903">Direct protein sequencing</keyword>
<keyword id="KW-0238">DNA-binding</keyword>
<keyword id="KW-1185">Reference proteome</keyword>
<keyword id="KW-0804">Transcription</keyword>
<keyword id="KW-0805">Transcription regulation</keyword>
<accession>P0A8S1</accession>
<accession>P24194</accession>
<accession>Q2M9S6</accession>
<sequence length="297" mass="33472">MKRPDYRTLQALDAVIRERGFERAAQKLCITQSAVSQRIKQLENMFGQPLLVRTVPPRPTEQGQKLLALLRQVELLEEEWLGDEQTGSTPLLLSLAVNADSLATWLLPALAPVLADSPIRLNLQVEDETRTQERLRRGEVVGAVSIQHQALPSCLVDKLGALDYLFVSSKPFAEKYFPNGVTRSALLKAPVVAFDHLDDMHQAFLQQNFDLPPGSVPCHIVNSSEAFVQLARQGTTCCMIPHLQIEKELASGELIDLTPGLFQRRMLYWHRFAPESRMMRKVTDALLDYGHKVLRQD</sequence>
<comment type="function">
    <text evidence="2 3 4 5 6 7 9 10">Controls the transcription of genes involved in arginine and lysine metabolism. Activates transcription of several genes, including argO, lysP, lysC, asd, dapB, dapD, lysA, gdhA and argK. Acts by binding directly to their promoter or control region (PubMed:10600368, PubMed:15150242, PubMed:17504942, PubMed:21441513, PubMed:21890697). ArgP dimer by itself is able to bind the argO promoter-operator region to form a binary complex, but the formation of a ternary complex with RNA polymerase is greatly stimulated only in presence of a coeffector. Both arginine and lysine are coeffectors at the argO promoter, but only arginine is competent to activate transcription. Lysine has repressive effects (PubMed:15150242, PubMed:17504942). ArgP also mediates lysine repression of dapB, and gdhA in vivo, but via an alternative mechanism: ArgP binding is directly reduced upon the addition of lysine (PubMed:21890697). Binds in vitro to the promoter region of dnaA and to the upstream region of the nrd promoter, but these genes are probably not regulated by ArgP in vivo (PubMed:21890697, PubMed:9254708, PubMed:9819053). In vitro, also binds to the three 13-mers located in the origin region (oriC) and blocks the initiation of replication (PubMed:1733927).</text>
</comment>
<comment type="activity regulation">
    <text evidence="8">Specifically cleaved by the protease DegP. Cleaved ArgP can no longer interact with the oriC region in vitro. Cleavage may play an important role in the control of the protein availability.</text>
</comment>
<comment type="subunit">
    <text evidence="1 4">Homodimer.</text>
</comment>
<comment type="developmental stage">
    <text evidence="4">The amount of protein increases in the late logarithmic phase.</text>
</comment>
<comment type="disruption phenotype">
    <text evidence="3">Null mutants are more sensitive to canavanine.</text>
</comment>
<comment type="similarity">
    <text evidence="13">Belongs to the LysR transcriptional regulatory family.</text>
</comment>
<dbReference type="EMBL" id="M62865">
    <property type="protein sequence ID" value="AAA62780.1"/>
    <property type="molecule type" value="Genomic_DNA"/>
</dbReference>
<dbReference type="EMBL" id="X66836">
    <property type="protein sequence ID" value="CAA47310.1"/>
    <property type="molecule type" value="Genomic_DNA"/>
</dbReference>
<dbReference type="EMBL" id="U28377">
    <property type="protein sequence ID" value="AAA69083.1"/>
    <property type="molecule type" value="Genomic_DNA"/>
</dbReference>
<dbReference type="EMBL" id="U00096">
    <property type="protein sequence ID" value="AAC75953.1"/>
    <property type="molecule type" value="Genomic_DNA"/>
</dbReference>
<dbReference type="EMBL" id="AP009048">
    <property type="protein sequence ID" value="BAE76980.1"/>
    <property type="molecule type" value="Genomic_DNA"/>
</dbReference>
<dbReference type="EMBL" id="X73026">
    <property type="protein sequence ID" value="CAA51508.1"/>
    <property type="molecule type" value="Genomic_DNA"/>
</dbReference>
<dbReference type="PIR" id="S22098">
    <property type="entry name" value="S22098"/>
</dbReference>
<dbReference type="RefSeq" id="NP_417391.1">
    <property type="nucleotide sequence ID" value="NC_000913.3"/>
</dbReference>
<dbReference type="RefSeq" id="WP_000828351.1">
    <property type="nucleotide sequence ID" value="NZ_STEB01000001.1"/>
</dbReference>
<dbReference type="SMR" id="P0A8S1"/>
<dbReference type="BioGRID" id="4263054">
    <property type="interactions" value="258"/>
</dbReference>
<dbReference type="DIP" id="DIP-48015N"/>
<dbReference type="FunCoup" id="P0A8S1">
    <property type="interactions" value="195"/>
</dbReference>
<dbReference type="IntAct" id="P0A8S1">
    <property type="interactions" value="8"/>
</dbReference>
<dbReference type="STRING" id="511145.b2916"/>
<dbReference type="jPOST" id="P0A8S1"/>
<dbReference type="PaxDb" id="511145-b2916"/>
<dbReference type="EnsemblBacteria" id="AAC75953">
    <property type="protein sequence ID" value="AAC75953"/>
    <property type="gene ID" value="b2916"/>
</dbReference>
<dbReference type="GeneID" id="93779084"/>
<dbReference type="GeneID" id="944867"/>
<dbReference type="KEGG" id="ecj:JW2883"/>
<dbReference type="KEGG" id="eco:b2916"/>
<dbReference type="KEGG" id="ecoc:C3026_15980"/>
<dbReference type="PATRIC" id="fig|1411691.4.peg.3816"/>
<dbReference type="EchoBASE" id="EB0485"/>
<dbReference type="eggNOG" id="COG0583">
    <property type="taxonomic scope" value="Bacteria"/>
</dbReference>
<dbReference type="HOGENOM" id="CLU_063829_0_0_6"/>
<dbReference type="InParanoid" id="P0A8S1"/>
<dbReference type="OMA" id="QGSTCCM"/>
<dbReference type="OrthoDB" id="3252676at2"/>
<dbReference type="PhylomeDB" id="P0A8S1"/>
<dbReference type="BioCyc" id="EcoCyc:EG10490-MONOMER"/>
<dbReference type="PRO" id="PR:P0A8S1"/>
<dbReference type="Proteomes" id="UP000000625">
    <property type="component" value="Chromosome"/>
</dbReference>
<dbReference type="GO" id="GO:0003681">
    <property type="term" value="F:bent DNA binding"/>
    <property type="evidence" value="ECO:0000314"/>
    <property type="project" value="EcoliWiki"/>
</dbReference>
<dbReference type="GO" id="GO:0003700">
    <property type="term" value="F:DNA-binding transcription factor activity"/>
    <property type="evidence" value="ECO:0000314"/>
    <property type="project" value="EcoCyc"/>
</dbReference>
<dbReference type="GO" id="GO:0043565">
    <property type="term" value="F:sequence-specific DNA binding"/>
    <property type="evidence" value="ECO:0000314"/>
    <property type="project" value="EcoliWiki"/>
</dbReference>
<dbReference type="GO" id="GO:0032297">
    <property type="term" value="P:negative regulation of DNA-templated DNA replication initiation"/>
    <property type="evidence" value="ECO:0000314"/>
    <property type="project" value="EcoCyc"/>
</dbReference>
<dbReference type="GO" id="GO:0045892">
    <property type="term" value="P:negative regulation of DNA-templated transcription"/>
    <property type="evidence" value="ECO:0000314"/>
    <property type="project" value="EcoCyc"/>
</dbReference>
<dbReference type="GO" id="GO:0045893">
    <property type="term" value="P:positive regulation of DNA-templated transcription"/>
    <property type="evidence" value="ECO:0000314"/>
    <property type="project" value="EcoCyc"/>
</dbReference>
<dbReference type="GO" id="GO:0006355">
    <property type="term" value="P:regulation of DNA-templated transcription"/>
    <property type="evidence" value="ECO:0000318"/>
    <property type="project" value="GO_Central"/>
</dbReference>
<dbReference type="CDD" id="cd08428">
    <property type="entry name" value="PBP2_IciA_ArgP"/>
    <property type="match status" value="1"/>
</dbReference>
<dbReference type="FunFam" id="1.10.10.10:FF:000061">
    <property type="entry name" value="HTH-type transcriptional regulator ArgP"/>
    <property type="match status" value="1"/>
</dbReference>
<dbReference type="FunFam" id="3.40.190.290:FF:000002">
    <property type="entry name" value="HTH-type transcriptional regulator ArgP"/>
    <property type="match status" value="1"/>
</dbReference>
<dbReference type="Gene3D" id="3.40.190.290">
    <property type="match status" value="1"/>
</dbReference>
<dbReference type="Gene3D" id="1.10.10.10">
    <property type="entry name" value="Winged helix-like DNA-binding domain superfamily/Winged helix DNA-binding domain"/>
    <property type="match status" value="1"/>
</dbReference>
<dbReference type="HAMAP" id="MF_00513">
    <property type="entry name" value="HTH_type_ArgP"/>
    <property type="match status" value="1"/>
</dbReference>
<dbReference type="InterPro" id="IPR017685">
    <property type="entry name" value="ArgP"/>
</dbReference>
<dbReference type="InterPro" id="IPR023490">
    <property type="entry name" value="ArgP_gammaproteobact"/>
</dbReference>
<dbReference type="InterPro" id="IPR050176">
    <property type="entry name" value="LTTR"/>
</dbReference>
<dbReference type="InterPro" id="IPR005119">
    <property type="entry name" value="LysR_subst-bd"/>
</dbReference>
<dbReference type="InterPro" id="IPR000847">
    <property type="entry name" value="Tscrpt_reg_HTH_LysR"/>
</dbReference>
<dbReference type="InterPro" id="IPR036388">
    <property type="entry name" value="WH-like_DNA-bd_sf"/>
</dbReference>
<dbReference type="InterPro" id="IPR036390">
    <property type="entry name" value="WH_DNA-bd_sf"/>
</dbReference>
<dbReference type="NCBIfam" id="TIGR03298">
    <property type="entry name" value="argP"/>
    <property type="match status" value="1"/>
</dbReference>
<dbReference type="NCBIfam" id="NF002964">
    <property type="entry name" value="PRK03635.1"/>
    <property type="match status" value="1"/>
</dbReference>
<dbReference type="NCBIfam" id="NF009888">
    <property type="entry name" value="PRK13348.1"/>
    <property type="match status" value="1"/>
</dbReference>
<dbReference type="PANTHER" id="PTHR30579:SF2">
    <property type="entry name" value="HTH-TYPE TRANSCRIPTIONAL REGULATOR ARGP"/>
    <property type="match status" value="1"/>
</dbReference>
<dbReference type="PANTHER" id="PTHR30579">
    <property type="entry name" value="TRANSCRIPTIONAL REGULATOR"/>
    <property type="match status" value="1"/>
</dbReference>
<dbReference type="Pfam" id="PF00126">
    <property type="entry name" value="HTH_1"/>
    <property type="match status" value="1"/>
</dbReference>
<dbReference type="Pfam" id="PF03466">
    <property type="entry name" value="LysR_substrate"/>
    <property type="match status" value="1"/>
</dbReference>
<dbReference type="PRINTS" id="PR00039">
    <property type="entry name" value="HTHLYSR"/>
</dbReference>
<dbReference type="SUPFAM" id="SSF53850">
    <property type="entry name" value="Periplasmic binding protein-like II"/>
    <property type="match status" value="1"/>
</dbReference>
<dbReference type="SUPFAM" id="SSF46785">
    <property type="entry name" value="Winged helix' DNA-binding domain"/>
    <property type="match status" value="1"/>
</dbReference>
<dbReference type="PROSITE" id="PS50931">
    <property type="entry name" value="HTH_LYSR"/>
    <property type="match status" value="1"/>
</dbReference>
<evidence type="ECO:0000255" key="1">
    <source>
        <dbReference type="HAMAP-Rule" id="MF_00513"/>
    </source>
</evidence>
<evidence type="ECO:0000269" key="2">
    <source>
    </source>
</evidence>
<evidence type="ECO:0000269" key="3">
    <source>
    </source>
</evidence>
<evidence type="ECO:0000269" key="4">
    <source>
    </source>
</evidence>
<evidence type="ECO:0000269" key="5">
    <source>
    </source>
</evidence>
<evidence type="ECO:0000269" key="6">
    <source>
    </source>
</evidence>
<evidence type="ECO:0000269" key="7">
    <source>
    </source>
</evidence>
<evidence type="ECO:0000269" key="8">
    <source>
    </source>
</evidence>
<evidence type="ECO:0000269" key="9">
    <source>
    </source>
</evidence>
<evidence type="ECO:0000269" key="10">
    <source>
    </source>
</evidence>
<evidence type="ECO:0000303" key="11">
    <source>
    </source>
</evidence>
<evidence type="ECO:0000303" key="12">
    <source>
    </source>
</evidence>
<evidence type="ECO:0000305" key="13"/>
<feature type="chain" id="PRO_0000105641" description="HTH-type transcriptional regulator ArgP">
    <location>
        <begin position="1"/>
        <end position="297"/>
    </location>
</feature>
<feature type="domain" description="HTH lysR-type" evidence="1">
    <location>
        <begin position="4"/>
        <end position="60"/>
    </location>
</feature>
<feature type="DNA-binding region" description="H-T-H motif" evidence="1">
    <location>
        <begin position="21"/>
        <end position="40"/>
    </location>
</feature>